<evidence type="ECO:0000250" key="1"/>
<evidence type="ECO:0000255" key="2"/>
<evidence type="ECO:0000305" key="3"/>
<reference key="1">
    <citation type="journal article" date="2001" name="Nature">
        <title>Genome sequence of enterohaemorrhagic Escherichia coli O157:H7.</title>
        <authorList>
            <person name="Perna N.T."/>
            <person name="Plunkett G. III"/>
            <person name="Burland V."/>
            <person name="Mau B."/>
            <person name="Glasner J.D."/>
            <person name="Rose D.J."/>
            <person name="Mayhew G.F."/>
            <person name="Evans P.S."/>
            <person name="Gregor J."/>
            <person name="Kirkpatrick H.A."/>
            <person name="Posfai G."/>
            <person name="Hackett J."/>
            <person name="Klink S."/>
            <person name="Boutin A."/>
            <person name="Shao Y."/>
            <person name="Miller L."/>
            <person name="Grotbeck E.J."/>
            <person name="Davis N.W."/>
            <person name="Lim A."/>
            <person name="Dimalanta E.T."/>
            <person name="Potamousis K."/>
            <person name="Apodaca J."/>
            <person name="Anantharaman T.S."/>
            <person name="Lin J."/>
            <person name="Yen G."/>
            <person name="Schwartz D.C."/>
            <person name="Welch R.A."/>
            <person name="Blattner F.R."/>
        </authorList>
    </citation>
    <scope>NUCLEOTIDE SEQUENCE [LARGE SCALE GENOMIC DNA]</scope>
    <source>
        <strain>O157:H7 / EDL933 / ATCC 700927 / EHEC</strain>
    </source>
</reference>
<reference key="2">
    <citation type="journal article" date="2001" name="DNA Res.">
        <title>Complete genome sequence of enterohemorrhagic Escherichia coli O157:H7 and genomic comparison with a laboratory strain K-12.</title>
        <authorList>
            <person name="Hayashi T."/>
            <person name="Makino K."/>
            <person name="Ohnishi M."/>
            <person name="Kurokawa K."/>
            <person name="Ishii K."/>
            <person name="Yokoyama K."/>
            <person name="Han C.-G."/>
            <person name="Ohtsubo E."/>
            <person name="Nakayama K."/>
            <person name="Murata T."/>
            <person name="Tanaka M."/>
            <person name="Tobe T."/>
            <person name="Iida T."/>
            <person name="Takami H."/>
            <person name="Honda T."/>
            <person name="Sasakawa C."/>
            <person name="Ogasawara N."/>
            <person name="Yasunaga T."/>
            <person name="Kuhara S."/>
            <person name="Shiba T."/>
            <person name="Hattori M."/>
            <person name="Shinagawa H."/>
        </authorList>
    </citation>
    <scope>NUCLEOTIDE SEQUENCE [LARGE SCALE GENOMIC DNA]</scope>
    <source>
        <strain>O157:H7 / Sakai / RIMD 0509952 / EHEC</strain>
    </source>
</reference>
<keyword id="KW-1003">Cell membrane</keyword>
<keyword id="KW-0472">Membrane</keyword>
<keyword id="KW-1185">Reference proteome</keyword>
<keyword id="KW-0732">Signal</keyword>
<keyword id="KW-0812">Transmembrane</keyword>
<keyword id="KW-1133">Transmembrane helix</keyword>
<organism>
    <name type="scientific">Escherichia coli O157:H7</name>
    <dbReference type="NCBI Taxonomy" id="83334"/>
    <lineage>
        <taxon>Bacteria</taxon>
        <taxon>Pseudomonadati</taxon>
        <taxon>Pseudomonadota</taxon>
        <taxon>Gammaproteobacteria</taxon>
        <taxon>Enterobacterales</taxon>
        <taxon>Enterobacteriaceae</taxon>
        <taxon>Escherichia</taxon>
    </lineage>
</organism>
<gene>
    <name type="primary">smp</name>
    <name type="ordered locus">Z5988.1</name>
    <name type="ordered locus">ECs5345.1</name>
</gene>
<sequence>MARTKLKFRLHRAVIVLFCLALLVALMQGASWFSQNHQRQRNPQLEELARTLARQVTLNVAPLMRTDSPDEKRIQAILDQLTDESRILDAGVYDEQGDLIARSGESVEVRDRLALDGKKAGGYFNQQIVEPIAGKNGPLGYLRLTLDTHTLATEAQQVDNTTNILRLMLLLSLAIGVVLTRTLLQGKRTRWQQSPFLLTASKPVPEEEESEKKE</sequence>
<dbReference type="EMBL" id="AE005174">
    <property type="protein sequence ID" value="AAG59567.1"/>
    <property type="status" value="ALT_SEQ"/>
    <property type="molecule type" value="Genomic_DNA"/>
</dbReference>
<dbReference type="EMBL" id="BA000007">
    <property type="protein sequence ID" value="BAB38768.1"/>
    <property type="status" value="ALT_SEQ"/>
    <property type="molecule type" value="Genomic_DNA"/>
</dbReference>
<dbReference type="PIR" id="A98297">
    <property type="entry name" value="A98297"/>
</dbReference>
<dbReference type="PIR" id="C86138">
    <property type="entry name" value="C86138"/>
</dbReference>
<dbReference type="RefSeq" id="WP_000124615.1">
    <property type="nucleotide sequence ID" value="NZ_SWKA01000005.1"/>
</dbReference>
<dbReference type="SMR" id="P60777"/>
<dbReference type="KEGG" id="ece:Z5988"/>
<dbReference type="KEGG" id="ecs:ECs_5345"/>
<dbReference type="PATRIC" id="fig|386585.9.peg.5592"/>
<dbReference type="HOGENOM" id="CLU_484629_0_0_6"/>
<dbReference type="Proteomes" id="UP000000558">
    <property type="component" value="Chromosome"/>
</dbReference>
<dbReference type="Proteomes" id="UP000002519">
    <property type="component" value="Chromosome"/>
</dbReference>
<dbReference type="GO" id="GO:0005886">
    <property type="term" value="C:plasma membrane"/>
    <property type="evidence" value="ECO:0007669"/>
    <property type="project" value="UniProtKB-SubCell"/>
</dbReference>
<dbReference type="InterPro" id="IPR019305">
    <property type="entry name" value="Uncharacterised_Smp"/>
</dbReference>
<dbReference type="NCBIfam" id="NF008419">
    <property type="entry name" value="PRK11246.1"/>
    <property type="match status" value="1"/>
</dbReference>
<dbReference type="Pfam" id="PF10144">
    <property type="entry name" value="SMP_2"/>
    <property type="match status" value="1"/>
</dbReference>
<accession>P60777</accession>
<accession>Q8XB31</accession>
<proteinExistence type="inferred from homology"/>
<comment type="subcellular location">
    <subcellularLocation>
        <location evidence="1">Cell membrane</location>
        <topology evidence="1">Single-pass membrane protein</topology>
    </subcellularLocation>
</comment>
<comment type="similarity">
    <text evidence="3">Belongs to the Smp family.</text>
</comment>
<comment type="sequence caution" evidence="3">
    <conflict type="miscellaneous discrepancy">
        <sequence resource="EMBL-CDS" id="AAG59567"/>
    </conflict>
    <text>A missing stop codon produces one ORF that contains smp and lplA.</text>
</comment>
<comment type="sequence caution" evidence="3">
    <conflict type="miscellaneous discrepancy">
        <sequence resource="EMBL-CDS" id="BAB38768"/>
    </conflict>
    <text>A missing stop codon produces one ORF that contains smp and lplA.</text>
</comment>
<protein>
    <recommendedName>
        <fullName>Protein Smp</fullName>
    </recommendedName>
</protein>
<name>SMP_ECO57</name>
<feature type="signal peptide" evidence="2">
    <location>
        <begin position="1"/>
        <end position="30"/>
    </location>
</feature>
<feature type="chain" id="PRO_0000032803" description="Protein Smp">
    <location>
        <begin position="31"/>
        <end position="214"/>
    </location>
</feature>
<feature type="transmembrane region" description="Helical" evidence="2">
    <location>
        <begin position="164"/>
        <end position="184"/>
    </location>
</feature>